<comment type="function">
    <text evidence="1">Subunit a, of the mitochondrial membrane ATP synthase complex (F(1)F(0) ATP synthase or Complex V) that produces ATP from ADP in the presence of a proton gradient across the membrane which is generated by electron transport complexes of the respiratory chain. ATP synthase complex consist of a soluble F(1) head domain - the catalytic core - and a membrane F(1) domain - the membrane proton channel. These two domains are linked by a central stalk rotating inside the F(1) region and a stationary peripheral stalk. During catalysis, ATP synthesis in the catalytic domain of F(1) is coupled via a rotary mechanism of the central stalk subunits to proton translocation. With the subunit c (ATP5MC1), forms the proton-conducting channel in the F(0) domain, that contains two crucial half-channels (inlet and outlet) that facilitate proton movement from the mitochondrial intermembrane space (IMS) into the matrix. Protons are taken up via the inlet half-channel and released through the outlet half-channel, following a Grotthuss mechanism.</text>
</comment>
<comment type="catalytic activity">
    <reaction evidence="1">
        <text>H(+)(in) = H(+)(out)</text>
        <dbReference type="Rhea" id="RHEA:34979"/>
        <dbReference type="ChEBI" id="CHEBI:15378"/>
    </reaction>
</comment>
<comment type="subunit">
    <text evidence="1">Component of the ATP synthase complex composed at least of ATP5F1A/subunit alpha, ATP5F1B/subunit beta, ATP5MC1/subunit c (homooctomer), MT-ATP6/subunit a, MT-ATP8/subunit 8, ATP5ME/subunit e, ATP5MF/subunit f, ATP5MG/subunit g, ATP5MK/subunit k, ATP5MJ/subunit j, ATP5F1C/subunit gamma, ATP5F1D/subunit delta, ATP5F1E/subunit epsilon, ATP5PF/subunit F6, ATP5PB/subunit b, ATP5PD/subunit d, ATP5PO/subunit OSCP. ATP synthase complex consists of a soluble F(1) head domain (subunits alpha(3) and beta(3)) - the catalytic core - and a membrane F(0) domain - the membrane proton channel (subunits c, a, 8, e, f, g, k and j). These two domains are linked by a central stalk (subunits gamma, delta, and epsilon) rotating inside the F1 region and a stationary peripheral stalk (subunits F6, b, d, and OSCP). Interacts with DNAJC30; interaction is direct.</text>
</comment>
<comment type="subcellular location">
    <subcellularLocation>
        <location>Mitochondrion inner membrane</location>
        <topology>Multi-pass membrane protein</topology>
    </subcellularLocation>
</comment>
<comment type="similarity">
    <text evidence="3">Belongs to the ATPase A chain family.</text>
</comment>
<dbReference type="EMBL" id="Z29573">
    <property type="protein sequence ID" value="CAA82682.1"/>
    <property type="molecule type" value="Genomic_DNA"/>
</dbReference>
<dbReference type="PIR" id="S47875">
    <property type="entry name" value="S47875"/>
</dbReference>
<dbReference type="RefSeq" id="NP_007100.1">
    <property type="nucleotide sequence ID" value="NC_001610.1"/>
</dbReference>
<dbReference type="SMR" id="P41313"/>
<dbReference type="GeneID" id="807785"/>
<dbReference type="CTD" id="4508"/>
<dbReference type="GO" id="GO:0005743">
    <property type="term" value="C:mitochondrial inner membrane"/>
    <property type="evidence" value="ECO:0007669"/>
    <property type="project" value="UniProtKB-SubCell"/>
</dbReference>
<dbReference type="GO" id="GO:0045259">
    <property type="term" value="C:proton-transporting ATP synthase complex"/>
    <property type="evidence" value="ECO:0000250"/>
    <property type="project" value="UniProtKB"/>
</dbReference>
<dbReference type="GO" id="GO:0015252">
    <property type="term" value="F:proton channel activity"/>
    <property type="evidence" value="ECO:0000250"/>
    <property type="project" value="UniProtKB"/>
</dbReference>
<dbReference type="GO" id="GO:0046933">
    <property type="term" value="F:proton-transporting ATP synthase activity, rotational mechanism"/>
    <property type="evidence" value="ECO:0007669"/>
    <property type="project" value="TreeGrafter"/>
</dbReference>
<dbReference type="GO" id="GO:0015986">
    <property type="term" value="P:proton motive force-driven ATP synthesis"/>
    <property type="evidence" value="ECO:0000250"/>
    <property type="project" value="UniProtKB"/>
</dbReference>
<dbReference type="GO" id="GO:1902600">
    <property type="term" value="P:proton transmembrane transport"/>
    <property type="evidence" value="ECO:0000250"/>
    <property type="project" value="UniProtKB"/>
</dbReference>
<dbReference type="CDD" id="cd00310">
    <property type="entry name" value="ATP-synt_Fo_a_6"/>
    <property type="match status" value="1"/>
</dbReference>
<dbReference type="FunFam" id="1.20.120.220:FF:000004">
    <property type="entry name" value="ATP synthase subunit a"/>
    <property type="match status" value="1"/>
</dbReference>
<dbReference type="Gene3D" id="1.20.120.220">
    <property type="entry name" value="ATP synthase, F0 complex, subunit A"/>
    <property type="match status" value="1"/>
</dbReference>
<dbReference type="InterPro" id="IPR000568">
    <property type="entry name" value="ATP_synth_F0_asu"/>
</dbReference>
<dbReference type="InterPro" id="IPR023011">
    <property type="entry name" value="ATP_synth_F0_asu_AS"/>
</dbReference>
<dbReference type="InterPro" id="IPR045083">
    <property type="entry name" value="ATP_synth_F0_asu_bact/mt"/>
</dbReference>
<dbReference type="InterPro" id="IPR035908">
    <property type="entry name" value="F0_ATP_A_sf"/>
</dbReference>
<dbReference type="NCBIfam" id="TIGR01131">
    <property type="entry name" value="ATP_synt_6_or_A"/>
    <property type="match status" value="1"/>
</dbReference>
<dbReference type="PANTHER" id="PTHR11410">
    <property type="entry name" value="ATP SYNTHASE SUBUNIT A"/>
    <property type="match status" value="1"/>
</dbReference>
<dbReference type="PANTHER" id="PTHR11410:SF0">
    <property type="entry name" value="ATP SYNTHASE SUBUNIT A"/>
    <property type="match status" value="1"/>
</dbReference>
<dbReference type="Pfam" id="PF00119">
    <property type="entry name" value="ATP-synt_A"/>
    <property type="match status" value="1"/>
</dbReference>
<dbReference type="PRINTS" id="PR00123">
    <property type="entry name" value="ATPASEA"/>
</dbReference>
<dbReference type="SUPFAM" id="SSF81336">
    <property type="entry name" value="F1F0 ATP synthase subunit A"/>
    <property type="match status" value="1"/>
</dbReference>
<dbReference type="PROSITE" id="PS00449">
    <property type="entry name" value="ATPASE_A"/>
    <property type="match status" value="1"/>
</dbReference>
<geneLocation type="mitochondrion"/>
<gene>
    <name evidence="1" type="primary">MT-ATP6</name>
    <name type="synonym">ATP6</name>
    <name type="synonym">ATPASE6</name>
    <name type="synonym">MTATP6</name>
</gene>
<evidence type="ECO:0000250" key="1">
    <source>
        <dbReference type="UniProtKB" id="P00846"/>
    </source>
</evidence>
<evidence type="ECO:0000255" key="2"/>
<evidence type="ECO:0000305" key="3"/>
<protein>
    <recommendedName>
        <fullName evidence="1">ATP synthase F(0) complex subunit a</fullName>
    </recommendedName>
    <alternativeName>
        <fullName>F-ATPase protein 6</fullName>
    </alternativeName>
    <alternativeName>
        <fullName evidence="1">Proton-conducting channel, ATP synthase F(0) complex subunit a</fullName>
    </alternativeName>
</protein>
<feature type="chain" id="PRO_0000082114" description="ATP synthase F(0) complex subunit a">
    <location>
        <begin position="1"/>
        <end position="226"/>
    </location>
</feature>
<feature type="transmembrane region" description="Helical" evidence="2">
    <location>
        <begin position="6"/>
        <end position="26"/>
    </location>
</feature>
<feature type="transmembrane region" description="Helical" evidence="2">
    <location>
        <begin position="68"/>
        <end position="88"/>
    </location>
</feature>
<feature type="transmembrane region" description="Helical" evidence="2">
    <location>
        <begin position="97"/>
        <end position="117"/>
    </location>
</feature>
<feature type="transmembrane region" description="Helical" evidence="2">
    <location>
        <begin position="138"/>
        <end position="158"/>
    </location>
</feature>
<feature type="transmembrane region" description="Helical" evidence="2">
    <location>
        <begin position="164"/>
        <end position="184"/>
    </location>
</feature>
<feature type="transmembrane region" description="Helical" evidence="2">
    <location>
        <begin position="195"/>
        <end position="215"/>
    </location>
</feature>
<accession>P41313</accession>
<reference key="1">
    <citation type="journal article" date="1994" name="Genetics">
        <title>The marsupial mitochondrial genome and the evolution of placental mammals.</title>
        <authorList>
            <person name="Janke A."/>
            <person name="Feldmaier-Fuchs G."/>
            <person name="Thomas K."/>
            <person name="von Haeseler A."/>
            <person name="Paabo S."/>
        </authorList>
    </citation>
    <scope>NUCLEOTIDE SEQUENCE [GENOMIC DNA]</scope>
    <source>
        <tissue>Liver</tissue>
    </source>
</reference>
<organism>
    <name type="scientific">Didelphis virginiana</name>
    <name type="common">North American opossum</name>
    <name type="synonym">Didelphis marsupialis virginiana</name>
    <dbReference type="NCBI Taxonomy" id="9267"/>
    <lineage>
        <taxon>Eukaryota</taxon>
        <taxon>Metazoa</taxon>
        <taxon>Chordata</taxon>
        <taxon>Craniata</taxon>
        <taxon>Vertebrata</taxon>
        <taxon>Euteleostomi</taxon>
        <taxon>Mammalia</taxon>
        <taxon>Metatheria</taxon>
        <taxon>Didelphimorphia</taxon>
        <taxon>Didelphidae</taxon>
        <taxon>Didelphis</taxon>
    </lineage>
</organism>
<sequence length="226" mass="25145">MNENLFAPFITPTILGITTLPIIITFPCLILSSPKRWLPNRIQILQMWLIRLITKQMMTMHNKQGRTWTLMLMSLILFIASTNLLGLLPYSFTPTTQLSMNIGMAIPLWAGTVIMGFRNKPKMSLAHFLPQGTPTPLIPMLIIIETISLFIQPLALAVRLTANITAGHLLIHLIGSATLALSSISMTVSTITFSILFLLTLLEIAVAMIQAYVFTLLVSLYLHDNS</sequence>
<keyword id="KW-0066">ATP synthesis</keyword>
<keyword id="KW-0138">CF(0)</keyword>
<keyword id="KW-0375">Hydrogen ion transport</keyword>
<keyword id="KW-0406">Ion transport</keyword>
<keyword id="KW-0472">Membrane</keyword>
<keyword id="KW-0496">Mitochondrion</keyword>
<keyword id="KW-0999">Mitochondrion inner membrane</keyword>
<keyword id="KW-0812">Transmembrane</keyword>
<keyword id="KW-1133">Transmembrane helix</keyword>
<keyword id="KW-0813">Transport</keyword>
<proteinExistence type="inferred from homology"/>
<name>ATP6_DIDVI</name>